<reference key="1">
    <citation type="journal article" date="2006" name="J. Bacteriol.">
        <title>Comparative genomic analysis of three strains of Ehrlichia ruminantium reveals an active process of genome size plasticity.</title>
        <authorList>
            <person name="Frutos R."/>
            <person name="Viari A."/>
            <person name="Ferraz C."/>
            <person name="Morgat A."/>
            <person name="Eychenie S."/>
            <person name="Kandassamy Y."/>
            <person name="Chantal I."/>
            <person name="Bensaid A."/>
            <person name="Coissac E."/>
            <person name="Vachiery N."/>
            <person name="Demaille J."/>
            <person name="Martinez D."/>
        </authorList>
    </citation>
    <scope>NUCLEOTIDE SEQUENCE [LARGE SCALE GENOMIC DNA]</scope>
    <source>
        <strain>Gardel</strain>
    </source>
</reference>
<organism>
    <name type="scientific">Ehrlichia ruminantium (strain Gardel)</name>
    <dbReference type="NCBI Taxonomy" id="302409"/>
    <lineage>
        <taxon>Bacteria</taxon>
        <taxon>Pseudomonadati</taxon>
        <taxon>Pseudomonadota</taxon>
        <taxon>Alphaproteobacteria</taxon>
        <taxon>Rickettsiales</taxon>
        <taxon>Anaplasmataceae</taxon>
        <taxon>Ehrlichia</taxon>
    </lineage>
</organism>
<dbReference type="EMBL" id="CR925677">
    <property type="protein sequence ID" value="CAI27697.1"/>
    <property type="molecule type" value="Genomic_DNA"/>
</dbReference>
<dbReference type="RefSeq" id="WP_011255411.1">
    <property type="nucleotide sequence ID" value="NC_006831.1"/>
</dbReference>
<dbReference type="SMR" id="Q5FHC4"/>
<dbReference type="KEGG" id="erg:ERGA_CDS_02450"/>
<dbReference type="HOGENOM" id="CLU_006684_3_0_5"/>
<dbReference type="OrthoDB" id="9802640at2"/>
<dbReference type="Proteomes" id="UP000000533">
    <property type="component" value="Chromosome"/>
</dbReference>
<dbReference type="GO" id="GO:0005737">
    <property type="term" value="C:cytoplasm"/>
    <property type="evidence" value="ECO:0007669"/>
    <property type="project" value="UniProtKB-SubCell"/>
</dbReference>
<dbReference type="GO" id="GO:0005524">
    <property type="term" value="F:ATP binding"/>
    <property type="evidence" value="ECO:0007669"/>
    <property type="project" value="UniProtKB-UniRule"/>
</dbReference>
<dbReference type="GO" id="GO:0016887">
    <property type="term" value="F:ATP hydrolysis activity"/>
    <property type="evidence" value="ECO:0007669"/>
    <property type="project" value="InterPro"/>
</dbReference>
<dbReference type="GO" id="GO:0140662">
    <property type="term" value="F:ATP-dependent protein folding chaperone"/>
    <property type="evidence" value="ECO:0007669"/>
    <property type="project" value="InterPro"/>
</dbReference>
<dbReference type="GO" id="GO:0051082">
    <property type="term" value="F:unfolded protein binding"/>
    <property type="evidence" value="ECO:0007669"/>
    <property type="project" value="UniProtKB-UniRule"/>
</dbReference>
<dbReference type="CDD" id="cd16927">
    <property type="entry name" value="HATPase_Hsp90-like"/>
    <property type="match status" value="1"/>
</dbReference>
<dbReference type="FunFam" id="3.30.565.10:FF:000009">
    <property type="entry name" value="Molecular chaperone HtpG"/>
    <property type="match status" value="1"/>
</dbReference>
<dbReference type="Gene3D" id="3.30.230.80">
    <property type="match status" value="1"/>
</dbReference>
<dbReference type="Gene3D" id="3.40.50.11260">
    <property type="match status" value="1"/>
</dbReference>
<dbReference type="Gene3D" id="1.20.120.790">
    <property type="entry name" value="Heat shock protein 90, C-terminal domain"/>
    <property type="match status" value="1"/>
</dbReference>
<dbReference type="Gene3D" id="3.30.565.10">
    <property type="entry name" value="Histidine kinase-like ATPase, C-terminal domain"/>
    <property type="match status" value="1"/>
</dbReference>
<dbReference type="HAMAP" id="MF_00505">
    <property type="entry name" value="HSP90"/>
    <property type="match status" value="1"/>
</dbReference>
<dbReference type="InterPro" id="IPR036890">
    <property type="entry name" value="HATPase_C_sf"/>
</dbReference>
<dbReference type="InterPro" id="IPR019805">
    <property type="entry name" value="Heat_shock_protein_90_CS"/>
</dbReference>
<dbReference type="InterPro" id="IPR037196">
    <property type="entry name" value="HSP90_C"/>
</dbReference>
<dbReference type="InterPro" id="IPR001404">
    <property type="entry name" value="Hsp90_fam"/>
</dbReference>
<dbReference type="InterPro" id="IPR020575">
    <property type="entry name" value="Hsp90_N"/>
</dbReference>
<dbReference type="InterPro" id="IPR020568">
    <property type="entry name" value="Ribosomal_Su5_D2-typ_SF"/>
</dbReference>
<dbReference type="NCBIfam" id="NF003555">
    <property type="entry name" value="PRK05218.1"/>
    <property type="match status" value="1"/>
</dbReference>
<dbReference type="PANTHER" id="PTHR11528">
    <property type="entry name" value="HEAT SHOCK PROTEIN 90 FAMILY MEMBER"/>
    <property type="match status" value="1"/>
</dbReference>
<dbReference type="Pfam" id="PF13589">
    <property type="entry name" value="HATPase_c_3"/>
    <property type="match status" value="1"/>
</dbReference>
<dbReference type="Pfam" id="PF00183">
    <property type="entry name" value="HSP90"/>
    <property type="match status" value="1"/>
</dbReference>
<dbReference type="PIRSF" id="PIRSF002583">
    <property type="entry name" value="Hsp90"/>
    <property type="match status" value="1"/>
</dbReference>
<dbReference type="PRINTS" id="PR00775">
    <property type="entry name" value="HEATSHOCK90"/>
</dbReference>
<dbReference type="SUPFAM" id="SSF55874">
    <property type="entry name" value="ATPase domain of HSP90 chaperone/DNA topoisomerase II/histidine kinase"/>
    <property type="match status" value="1"/>
</dbReference>
<dbReference type="SUPFAM" id="SSF110942">
    <property type="entry name" value="HSP90 C-terminal domain"/>
    <property type="match status" value="1"/>
</dbReference>
<dbReference type="SUPFAM" id="SSF54211">
    <property type="entry name" value="Ribosomal protein S5 domain 2-like"/>
    <property type="match status" value="1"/>
</dbReference>
<dbReference type="PROSITE" id="PS00298">
    <property type="entry name" value="HSP90"/>
    <property type="match status" value="1"/>
</dbReference>
<protein>
    <recommendedName>
        <fullName evidence="1">Chaperone protein HtpG</fullName>
    </recommendedName>
    <alternativeName>
        <fullName evidence="1">Heat shock protein HtpG</fullName>
    </alternativeName>
    <alternativeName>
        <fullName evidence="1">High temperature protein G</fullName>
    </alternativeName>
</protein>
<sequence>MQGTVNSERLKFDAEVGKVLKLVIHSLYTNKDIFLRELISNASDACDKLRYQSLSNQDLMDAGSELKIVISVDKDKNRLYISDNGIGMNREDLINNLGTIAHSGTQKFLDAINSGASSQQGVVELIGKFGVGFYSAFMVASEVIVESCKAGESVGYQWKSSGDGEFVISQLESDQVSRGTRITLALKPEECEFVDKFRIEHIVTTYSYHINYPVYFLNDKGEEERLNSEAAIWTKAKDEISAEEHQNFFRTVAHVGGEPWMILHNKNEGVIEYTNLLYIPSIKPFDLFHPDRKCSVKLYVNKVFITEDNVQIIPQYLRFLKGIIDSSDLPLNISRETLQNNKIIEKIKRSLVKRVLSELKKKAESNIEDYTKFWDNFGSVLKEGLCESMNTEFREELISVCRFYSTHSNDSLISLEDYIERMKPEQNNIYYLTGNDLDSIKKSPQLEGFVSRGVEVLLLVDPVDDFWTNVVTDYQKVPLRSVIRADEDLEKFSDVEKGDESKDSQNEDTQSKEKVDKFIGYAAQVLNNLVSNVRVSKKLTDSPVCLAVADGSMDIRMERFLREQKQLNYKSTKILEINSKHPIISKMIDQYTENGESAMLCNMLHLLLGQACILEGEELQNVSDFAERMNSVLSQIN</sequence>
<feature type="chain" id="PRO_0000224205" description="Chaperone protein HtpG">
    <location>
        <begin position="1"/>
        <end position="637"/>
    </location>
</feature>
<feature type="region of interest" description="A; substrate-binding" evidence="1">
    <location>
        <begin position="1"/>
        <end position="335"/>
    </location>
</feature>
<feature type="region of interest" description="B" evidence="1">
    <location>
        <begin position="336"/>
        <end position="559"/>
    </location>
</feature>
<feature type="region of interest" description="C" evidence="1">
    <location>
        <begin position="560"/>
        <end position="637"/>
    </location>
</feature>
<accession>Q5FHC4</accession>
<evidence type="ECO:0000255" key="1">
    <source>
        <dbReference type="HAMAP-Rule" id="MF_00505"/>
    </source>
</evidence>
<comment type="function">
    <text evidence="1">Molecular chaperone. Has ATPase activity.</text>
</comment>
<comment type="subunit">
    <text evidence="1">Homodimer.</text>
</comment>
<comment type="subcellular location">
    <subcellularLocation>
        <location evidence="1">Cytoplasm</location>
    </subcellularLocation>
</comment>
<comment type="similarity">
    <text evidence="1">Belongs to the heat shock protein 90 family.</text>
</comment>
<name>HTPG_EHRRG</name>
<proteinExistence type="inferred from homology"/>
<keyword id="KW-0067">ATP-binding</keyword>
<keyword id="KW-0143">Chaperone</keyword>
<keyword id="KW-0963">Cytoplasm</keyword>
<keyword id="KW-0547">Nucleotide-binding</keyword>
<keyword id="KW-0346">Stress response</keyword>
<gene>
    <name evidence="1" type="primary">htpG</name>
    <name type="ordered locus">ERGA_CDS_02450</name>
</gene>